<name>RPOB_LEVBA</name>
<sequence length="1203" mass="134300">MAGHLVKYGKHRTRRSYSRIKEVLDLPNLIEIQTNSYNWFLDEGLRDMFDDIMPIEDFQGNLSLEFVDYQLLEPKYSVDEAREHDANYSAPLHVTLRLTNHETGEIKSQDVFFGDFPLMTAQGTFIINGAERVIVSQLVRSPGVYFNEDTDKNGRTVYGATVIPNRGAWLEFETDAKNVSYVRIDRTRKIPMTELVRALGFGSDDEILDILGDNESLMQTLEKDIHKNTDDSRVEESLKDIYERLRPGEPKTADSSRSLLTARFFDPKRYDMAPVGRYKTNKKLSLKTRLLGLTLAETLADPDTGEIIAAKGTVVDKDVMKSLAPFLDQDDFKMVTFQPSDEAVVTEPLKLQIIKVQSPDDPEQEVPVIGNGNIDIKLKHIRPADIIASMNYFFDLQLGIGNTDDIDHLGNRRIRSVGELLQNQFRIGLSRMERVVRERMSIQDAATVTPQQLINIRPVVASIKEFFGSSQLSQFMDQTNPLGELTHKRRLSALGPGGLTRDRAGYEVRDVHYTHYGRMCPIETPEGPNIGLINSLSSYARVNKYGFIETPYRRVSWDTHKVTDKIDYLTADEEDNYVVAQANTPLNDDGSFNTDTIMARAQSENIETSADRIDYMDVSPKQVVAVATACIPFLENDDSNRALMGANMQRQAVPLLNPHAPLIGTGIEYKAAHDSGVALISQHDGTVEYVDAREIRVRREDGALDTYKLMKFRRSNGGKNYNQRPIVKVGDHVDNDEVLADGPSMENGELALGQNPLVAFMTWQGYNFEDAIGINERLVRDDVYTSIHIEEYESEARDTKLGPEEMTREIPNVGEDALKNLDEDGIIRVGAEVQDGDILVGKVTPKGVTELSAEERLLHAIFGEKAREVRDTSLKVPHGGGGIIQDVKIFTRENGDELSPGVNMMVRVYIAQKRKIQVGDKMSGRHGNKGTVSVVIPEEDMPYMPDGTPIDIMLSPMGVPSRMNIGQVLELHLGMAARKLGVHMATPVFDGAQDTDIADAVKEAGMAADAKTVLYDGRTGEPFDKRVAVGVMHYLKLAHMVDDKMHARSIGPYSLVTQQPLGGKAQFGGQRFGEMEVWALEAYGAAYTLQEILTYKSDDVVGRVKTYEAIVKGDPIPKPGVPESFRVLVKELQSLGLDMKVLNGDKEEIELRDMDDEDDDVVNVDALSKYAQQQEEQRKAAAQTDESKTAPATKNESQPNTQD</sequence>
<dbReference type="EC" id="2.7.7.6" evidence="1"/>
<dbReference type="EMBL" id="CP000416">
    <property type="protein sequence ID" value="ABJ64773.1"/>
    <property type="molecule type" value="Genomic_DNA"/>
</dbReference>
<dbReference type="RefSeq" id="WP_011668507.1">
    <property type="nucleotide sequence ID" value="NC_008497.1"/>
</dbReference>
<dbReference type="SMR" id="Q03PU9"/>
<dbReference type="STRING" id="387344.LVIS_1698"/>
<dbReference type="KEGG" id="lbr:LVIS_1698"/>
<dbReference type="eggNOG" id="COG0085">
    <property type="taxonomic scope" value="Bacteria"/>
</dbReference>
<dbReference type="HOGENOM" id="CLU_000524_4_1_9"/>
<dbReference type="Proteomes" id="UP000001652">
    <property type="component" value="Chromosome"/>
</dbReference>
<dbReference type="GO" id="GO:0000428">
    <property type="term" value="C:DNA-directed RNA polymerase complex"/>
    <property type="evidence" value="ECO:0007669"/>
    <property type="project" value="UniProtKB-KW"/>
</dbReference>
<dbReference type="GO" id="GO:0003677">
    <property type="term" value="F:DNA binding"/>
    <property type="evidence" value="ECO:0007669"/>
    <property type="project" value="UniProtKB-UniRule"/>
</dbReference>
<dbReference type="GO" id="GO:0003899">
    <property type="term" value="F:DNA-directed RNA polymerase activity"/>
    <property type="evidence" value="ECO:0007669"/>
    <property type="project" value="UniProtKB-UniRule"/>
</dbReference>
<dbReference type="GO" id="GO:0032549">
    <property type="term" value="F:ribonucleoside binding"/>
    <property type="evidence" value="ECO:0007669"/>
    <property type="project" value="InterPro"/>
</dbReference>
<dbReference type="GO" id="GO:0006351">
    <property type="term" value="P:DNA-templated transcription"/>
    <property type="evidence" value="ECO:0007669"/>
    <property type="project" value="UniProtKB-UniRule"/>
</dbReference>
<dbReference type="CDD" id="cd00653">
    <property type="entry name" value="RNA_pol_B_RPB2"/>
    <property type="match status" value="1"/>
</dbReference>
<dbReference type="FunFam" id="3.90.1800.10:FF:000001">
    <property type="entry name" value="DNA-directed RNA polymerase subunit beta"/>
    <property type="match status" value="1"/>
</dbReference>
<dbReference type="Gene3D" id="2.40.50.150">
    <property type="match status" value="1"/>
</dbReference>
<dbReference type="Gene3D" id="3.90.1100.10">
    <property type="match status" value="1"/>
</dbReference>
<dbReference type="Gene3D" id="2.40.270.10">
    <property type="entry name" value="DNA-directed RNA polymerase, subunit 2, domain 6"/>
    <property type="match status" value="3"/>
</dbReference>
<dbReference type="Gene3D" id="3.90.1800.10">
    <property type="entry name" value="RNA polymerase alpha subunit dimerisation domain"/>
    <property type="match status" value="1"/>
</dbReference>
<dbReference type="Gene3D" id="3.90.1110.10">
    <property type="entry name" value="RNA polymerase Rpb2, domain 2"/>
    <property type="match status" value="1"/>
</dbReference>
<dbReference type="HAMAP" id="MF_01321">
    <property type="entry name" value="RNApol_bact_RpoB"/>
    <property type="match status" value="1"/>
</dbReference>
<dbReference type="InterPro" id="IPR019462">
    <property type="entry name" value="DNA-dir_RNA_pol_bsu_external_1"/>
</dbReference>
<dbReference type="InterPro" id="IPR015712">
    <property type="entry name" value="DNA-dir_RNA_pol_su2"/>
</dbReference>
<dbReference type="InterPro" id="IPR007120">
    <property type="entry name" value="DNA-dir_RNAP_su2_dom"/>
</dbReference>
<dbReference type="InterPro" id="IPR037033">
    <property type="entry name" value="DNA-dir_RNAP_su2_hyb_sf"/>
</dbReference>
<dbReference type="InterPro" id="IPR010243">
    <property type="entry name" value="RNA_pol_bsu_bac"/>
</dbReference>
<dbReference type="InterPro" id="IPR007121">
    <property type="entry name" value="RNA_pol_bsu_CS"/>
</dbReference>
<dbReference type="InterPro" id="IPR007644">
    <property type="entry name" value="RNA_pol_bsu_protrusion"/>
</dbReference>
<dbReference type="InterPro" id="IPR007642">
    <property type="entry name" value="RNA_pol_Rpb2_2"/>
</dbReference>
<dbReference type="InterPro" id="IPR037034">
    <property type="entry name" value="RNA_pol_Rpb2_2_sf"/>
</dbReference>
<dbReference type="InterPro" id="IPR007645">
    <property type="entry name" value="RNA_pol_Rpb2_3"/>
</dbReference>
<dbReference type="InterPro" id="IPR007641">
    <property type="entry name" value="RNA_pol_Rpb2_7"/>
</dbReference>
<dbReference type="InterPro" id="IPR014724">
    <property type="entry name" value="RNA_pol_RPB2_OB-fold"/>
</dbReference>
<dbReference type="NCBIfam" id="NF001616">
    <property type="entry name" value="PRK00405.1"/>
    <property type="match status" value="1"/>
</dbReference>
<dbReference type="NCBIfam" id="TIGR02013">
    <property type="entry name" value="rpoB"/>
    <property type="match status" value="1"/>
</dbReference>
<dbReference type="PANTHER" id="PTHR20856">
    <property type="entry name" value="DNA-DIRECTED RNA POLYMERASE I SUBUNIT 2"/>
    <property type="match status" value="1"/>
</dbReference>
<dbReference type="Pfam" id="PF04563">
    <property type="entry name" value="RNA_pol_Rpb2_1"/>
    <property type="match status" value="1"/>
</dbReference>
<dbReference type="Pfam" id="PF04561">
    <property type="entry name" value="RNA_pol_Rpb2_2"/>
    <property type="match status" value="2"/>
</dbReference>
<dbReference type="Pfam" id="PF04565">
    <property type="entry name" value="RNA_pol_Rpb2_3"/>
    <property type="match status" value="1"/>
</dbReference>
<dbReference type="Pfam" id="PF10385">
    <property type="entry name" value="RNA_pol_Rpb2_45"/>
    <property type="match status" value="1"/>
</dbReference>
<dbReference type="Pfam" id="PF00562">
    <property type="entry name" value="RNA_pol_Rpb2_6"/>
    <property type="match status" value="1"/>
</dbReference>
<dbReference type="Pfam" id="PF04560">
    <property type="entry name" value="RNA_pol_Rpb2_7"/>
    <property type="match status" value="1"/>
</dbReference>
<dbReference type="SUPFAM" id="SSF64484">
    <property type="entry name" value="beta and beta-prime subunits of DNA dependent RNA-polymerase"/>
    <property type="match status" value="1"/>
</dbReference>
<dbReference type="PROSITE" id="PS01166">
    <property type="entry name" value="RNA_POL_BETA"/>
    <property type="match status" value="1"/>
</dbReference>
<accession>Q03PU9</accession>
<proteinExistence type="inferred from homology"/>
<comment type="function">
    <text evidence="1">DNA-dependent RNA polymerase catalyzes the transcription of DNA into RNA using the four ribonucleoside triphosphates as substrates.</text>
</comment>
<comment type="catalytic activity">
    <reaction evidence="1">
        <text>RNA(n) + a ribonucleoside 5'-triphosphate = RNA(n+1) + diphosphate</text>
        <dbReference type="Rhea" id="RHEA:21248"/>
        <dbReference type="Rhea" id="RHEA-COMP:14527"/>
        <dbReference type="Rhea" id="RHEA-COMP:17342"/>
        <dbReference type="ChEBI" id="CHEBI:33019"/>
        <dbReference type="ChEBI" id="CHEBI:61557"/>
        <dbReference type="ChEBI" id="CHEBI:140395"/>
        <dbReference type="EC" id="2.7.7.6"/>
    </reaction>
</comment>
<comment type="subunit">
    <text evidence="1">The RNAP catalytic core consists of 2 alpha, 1 beta, 1 beta' and 1 omega subunit. When a sigma factor is associated with the core the holoenzyme is formed, which can initiate transcription.</text>
</comment>
<comment type="similarity">
    <text evidence="1">Belongs to the RNA polymerase beta chain family.</text>
</comment>
<protein>
    <recommendedName>
        <fullName evidence="1">DNA-directed RNA polymerase subunit beta</fullName>
        <shortName evidence="1">RNAP subunit beta</shortName>
        <ecNumber evidence="1">2.7.7.6</ecNumber>
    </recommendedName>
    <alternativeName>
        <fullName evidence="1">RNA polymerase subunit beta</fullName>
    </alternativeName>
    <alternativeName>
        <fullName evidence="1">Transcriptase subunit beta</fullName>
    </alternativeName>
</protein>
<gene>
    <name evidence="1" type="primary">rpoB</name>
    <name type="ordered locus">LVIS_1698</name>
</gene>
<evidence type="ECO:0000255" key="1">
    <source>
        <dbReference type="HAMAP-Rule" id="MF_01321"/>
    </source>
</evidence>
<evidence type="ECO:0000256" key="2">
    <source>
        <dbReference type="SAM" id="MobiDB-lite"/>
    </source>
</evidence>
<keyword id="KW-0240">DNA-directed RNA polymerase</keyword>
<keyword id="KW-0548">Nucleotidyltransferase</keyword>
<keyword id="KW-1185">Reference proteome</keyword>
<keyword id="KW-0804">Transcription</keyword>
<keyword id="KW-0808">Transferase</keyword>
<reference key="1">
    <citation type="journal article" date="2006" name="Proc. Natl. Acad. Sci. U.S.A.">
        <title>Comparative genomics of the lactic acid bacteria.</title>
        <authorList>
            <person name="Makarova K.S."/>
            <person name="Slesarev A."/>
            <person name="Wolf Y.I."/>
            <person name="Sorokin A."/>
            <person name="Mirkin B."/>
            <person name="Koonin E.V."/>
            <person name="Pavlov A."/>
            <person name="Pavlova N."/>
            <person name="Karamychev V."/>
            <person name="Polouchine N."/>
            <person name="Shakhova V."/>
            <person name="Grigoriev I."/>
            <person name="Lou Y."/>
            <person name="Rohksar D."/>
            <person name="Lucas S."/>
            <person name="Huang K."/>
            <person name="Goodstein D.M."/>
            <person name="Hawkins T."/>
            <person name="Plengvidhya V."/>
            <person name="Welker D."/>
            <person name="Hughes J."/>
            <person name="Goh Y."/>
            <person name="Benson A."/>
            <person name="Baldwin K."/>
            <person name="Lee J.-H."/>
            <person name="Diaz-Muniz I."/>
            <person name="Dosti B."/>
            <person name="Smeianov V."/>
            <person name="Wechter W."/>
            <person name="Barabote R."/>
            <person name="Lorca G."/>
            <person name="Altermann E."/>
            <person name="Barrangou R."/>
            <person name="Ganesan B."/>
            <person name="Xie Y."/>
            <person name="Rawsthorne H."/>
            <person name="Tamir D."/>
            <person name="Parker C."/>
            <person name="Breidt F."/>
            <person name="Broadbent J.R."/>
            <person name="Hutkins R."/>
            <person name="O'Sullivan D."/>
            <person name="Steele J."/>
            <person name="Unlu G."/>
            <person name="Saier M.H. Jr."/>
            <person name="Klaenhammer T."/>
            <person name="Richardson P."/>
            <person name="Kozyavkin S."/>
            <person name="Weimer B.C."/>
            <person name="Mills D.A."/>
        </authorList>
    </citation>
    <scope>NUCLEOTIDE SEQUENCE [LARGE SCALE GENOMIC DNA]</scope>
    <source>
        <strain>ATCC 367 / BCRC 12310 / CIP 105137 / JCM 1170 / LMG 11437 / NCIMB 947 / NCTC 947</strain>
    </source>
</reference>
<organism>
    <name type="scientific">Levilactobacillus brevis (strain ATCC 367 / BCRC 12310 / CIP 105137 / JCM 1170 / LMG 11437 / NCIMB 947 / NCTC 947)</name>
    <name type="common">Lactobacillus brevis</name>
    <dbReference type="NCBI Taxonomy" id="387344"/>
    <lineage>
        <taxon>Bacteria</taxon>
        <taxon>Bacillati</taxon>
        <taxon>Bacillota</taxon>
        <taxon>Bacilli</taxon>
        <taxon>Lactobacillales</taxon>
        <taxon>Lactobacillaceae</taxon>
        <taxon>Levilactobacillus</taxon>
    </lineage>
</organism>
<feature type="chain" id="PRO_0000300329" description="DNA-directed RNA polymerase subunit beta">
    <location>
        <begin position="1"/>
        <end position="1203"/>
    </location>
</feature>
<feature type="region of interest" description="Disordered" evidence="2">
    <location>
        <begin position="1167"/>
        <end position="1203"/>
    </location>
</feature>
<feature type="compositionally biased region" description="Polar residues" evidence="2">
    <location>
        <begin position="1190"/>
        <end position="1203"/>
    </location>
</feature>